<name>GLMS_HALH5</name>
<sequence>MCGIVGYIGTEDAKEILLKGLEKLEYRGYDSAGIAVATEEGVHIFKEKGRIATLREVVDQGVKSTVGIGHTRWATHGEPSKVNAHPHQSESSRFTIVHNGVIENYEQLKRDYLQAVTLQSDTDTEVVVQLVERFVHEGQSVEAAFRHTLSLLKGSYAIALLDKKDTDTIYVGKNKSPLLVGVQDGVNVVASDAMAMLQVTDQFLEIMDEEIVIVTKDDVTIKTLDGTAVSREPYTAELDASDIEKGTYPHFMLKEIDEQPFVIRNIIQKYQNEDGSVRLDEDIRQAVMEADRIYIIAAGTSYHAGLVGKQLIENFAKQPVEVHIASEFLYNMPLLSKRPLFIFISQSGETADSRGVLVEVKKLGYKALTITNVPGSTLSREADFTLHTHAGPEIAVASTKAYTAQMAVLTLLAADTAKAKGIDLGFDPIQELSIVANAMETLCNQKETLEKIARDYLAVTRNCFFIGRATDYFVCLEGALKLKEISYIQAEGFAGGELKHGTIALIEEGTPIVALATQEHVNLSIRGNVKEVAARGAFPCIISMEGLNEEDDTFVLPKVHSHLTPLVSVIPLQLIAYYAALHRGCDVDKPRNLAKSVTVE</sequence>
<evidence type="ECO:0000255" key="1">
    <source>
        <dbReference type="HAMAP-Rule" id="MF_00164"/>
    </source>
</evidence>
<proteinExistence type="inferred from homology"/>
<comment type="function">
    <text evidence="1">Catalyzes the first step in hexosamine metabolism, converting fructose-6P into glucosamine-6P using glutamine as a nitrogen source.</text>
</comment>
<comment type="catalytic activity">
    <reaction evidence="1">
        <text>D-fructose 6-phosphate + L-glutamine = D-glucosamine 6-phosphate + L-glutamate</text>
        <dbReference type="Rhea" id="RHEA:13237"/>
        <dbReference type="ChEBI" id="CHEBI:29985"/>
        <dbReference type="ChEBI" id="CHEBI:58359"/>
        <dbReference type="ChEBI" id="CHEBI:58725"/>
        <dbReference type="ChEBI" id="CHEBI:61527"/>
        <dbReference type="EC" id="2.6.1.16"/>
    </reaction>
</comment>
<comment type="subunit">
    <text evidence="1">Homodimer.</text>
</comment>
<comment type="subcellular location">
    <subcellularLocation>
        <location evidence="1">Cytoplasm</location>
    </subcellularLocation>
</comment>
<protein>
    <recommendedName>
        <fullName evidence="1">Glutamine--fructose-6-phosphate aminotransferase [isomerizing]</fullName>
        <ecNumber evidence="1">2.6.1.16</ecNumber>
    </recommendedName>
    <alternativeName>
        <fullName evidence="1">D-fructose-6-phosphate amidotransferase</fullName>
    </alternativeName>
    <alternativeName>
        <fullName evidence="1">GFAT</fullName>
    </alternativeName>
    <alternativeName>
        <fullName evidence="1">Glucosamine-6-phosphate synthase</fullName>
    </alternativeName>
    <alternativeName>
        <fullName evidence="1">Hexosephosphate aminotransferase</fullName>
    </alternativeName>
    <alternativeName>
        <fullName evidence="1">L-glutamine--D-fructose-6-phosphate amidotransferase</fullName>
    </alternativeName>
</protein>
<accession>Q9KG45</accession>
<keyword id="KW-0032">Aminotransferase</keyword>
<keyword id="KW-0963">Cytoplasm</keyword>
<keyword id="KW-0315">Glutamine amidotransferase</keyword>
<keyword id="KW-1185">Reference proteome</keyword>
<keyword id="KW-0677">Repeat</keyword>
<keyword id="KW-0808">Transferase</keyword>
<reference key="1">
    <citation type="journal article" date="2000" name="Nucleic Acids Res.">
        <title>Complete genome sequence of the alkaliphilic bacterium Bacillus halodurans and genomic sequence comparison with Bacillus subtilis.</title>
        <authorList>
            <person name="Takami H."/>
            <person name="Nakasone K."/>
            <person name="Takaki Y."/>
            <person name="Maeno G."/>
            <person name="Sasaki R."/>
            <person name="Masui N."/>
            <person name="Fuji F."/>
            <person name="Hirama C."/>
            <person name="Nakamura Y."/>
            <person name="Ogasawara N."/>
            <person name="Kuhara S."/>
            <person name="Horikoshi K."/>
        </authorList>
    </citation>
    <scope>NUCLEOTIDE SEQUENCE [LARGE SCALE GENOMIC DNA]</scope>
    <source>
        <strain>ATCC BAA-125 / DSM 18197 / FERM 7344 / JCM 9153 / C-125</strain>
    </source>
</reference>
<dbReference type="EC" id="2.6.1.16" evidence="1"/>
<dbReference type="EMBL" id="BA000004">
    <property type="protein sequence ID" value="BAB03987.1"/>
    <property type="molecule type" value="Genomic_DNA"/>
</dbReference>
<dbReference type="PIR" id="D83683">
    <property type="entry name" value="D83683"/>
</dbReference>
<dbReference type="RefSeq" id="WP_010896450.1">
    <property type="nucleotide sequence ID" value="NC_002570.2"/>
</dbReference>
<dbReference type="SMR" id="Q9KG45"/>
<dbReference type="STRING" id="272558.gene:10726121"/>
<dbReference type="KEGG" id="bha:BH0268"/>
<dbReference type="eggNOG" id="COG0449">
    <property type="taxonomic scope" value="Bacteria"/>
</dbReference>
<dbReference type="HOGENOM" id="CLU_012520_7_1_9"/>
<dbReference type="OrthoDB" id="106547at2"/>
<dbReference type="Proteomes" id="UP000001258">
    <property type="component" value="Chromosome"/>
</dbReference>
<dbReference type="GO" id="GO:0005829">
    <property type="term" value="C:cytosol"/>
    <property type="evidence" value="ECO:0007669"/>
    <property type="project" value="TreeGrafter"/>
</dbReference>
<dbReference type="GO" id="GO:0097367">
    <property type="term" value="F:carbohydrate derivative binding"/>
    <property type="evidence" value="ECO:0007669"/>
    <property type="project" value="InterPro"/>
</dbReference>
<dbReference type="GO" id="GO:0004360">
    <property type="term" value="F:glutamine-fructose-6-phosphate transaminase (isomerizing) activity"/>
    <property type="evidence" value="ECO:0007669"/>
    <property type="project" value="UniProtKB-UniRule"/>
</dbReference>
<dbReference type="GO" id="GO:0005975">
    <property type="term" value="P:carbohydrate metabolic process"/>
    <property type="evidence" value="ECO:0007669"/>
    <property type="project" value="UniProtKB-UniRule"/>
</dbReference>
<dbReference type="GO" id="GO:0006002">
    <property type="term" value="P:fructose 6-phosphate metabolic process"/>
    <property type="evidence" value="ECO:0007669"/>
    <property type="project" value="TreeGrafter"/>
</dbReference>
<dbReference type="GO" id="GO:0006487">
    <property type="term" value="P:protein N-linked glycosylation"/>
    <property type="evidence" value="ECO:0007669"/>
    <property type="project" value="TreeGrafter"/>
</dbReference>
<dbReference type="GO" id="GO:0006047">
    <property type="term" value="P:UDP-N-acetylglucosamine metabolic process"/>
    <property type="evidence" value="ECO:0007669"/>
    <property type="project" value="TreeGrafter"/>
</dbReference>
<dbReference type="CDD" id="cd00714">
    <property type="entry name" value="GFAT"/>
    <property type="match status" value="1"/>
</dbReference>
<dbReference type="CDD" id="cd05008">
    <property type="entry name" value="SIS_GlmS_GlmD_1"/>
    <property type="match status" value="1"/>
</dbReference>
<dbReference type="CDD" id="cd05009">
    <property type="entry name" value="SIS_GlmS_GlmD_2"/>
    <property type="match status" value="1"/>
</dbReference>
<dbReference type="FunFam" id="3.40.50.10490:FF:000022">
    <property type="entry name" value="Glutamine--fructose-6-phosphate aminotransferase [isomerizing]"/>
    <property type="match status" value="1"/>
</dbReference>
<dbReference type="FunFam" id="3.60.20.10:FF:000006">
    <property type="entry name" value="Glutamine--fructose-6-phosphate aminotransferase [isomerizing]"/>
    <property type="match status" value="1"/>
</dbReference>
<dbReference type="Gene3D" id="3.40.50.10490">
    <property type="entry name" value="Glucose-6-phosphate isomerase like protein, domain 1"/>
    <property type="match status" value="2"/>
</dbReference>
<dbReference type="Gene3D" id="3.60.20.10">
    <property type="entry name" value="Glutamine Phosphoribosylpyrophosphate, subunit 1, domain 1"/>
    <property type="match status" value="1"/>
</dbReference>
<dbReference type="HAMAP" id="MF_00164">
    <property type="entry name" value="GlmS"/>
    <property type="match status" value="1"/>
</dbReference>
<dbReference type="InterPro" id="IPR017932">
    <property type="entry name" value="GATase_2_dom"/>
</dbReference>
<dbReference type="InterPro" id="IPR005855">
    <property type="entry name" value="GFAT"/>
</dbReference>
<dbReference type="InterPro" id="IPR047084">
    <property type="entry name" value="GFAT_N"/>
</dbReference>
<dbReference type="InterPro" id="IPR035466">
    <property type="entry name" value="GlmS/AgaS_SIS"/>
</dbReference>
<dbReference type="InterPro" id="IPR035490">
    <property type="entry name" value="GlmS/FrlB_SIS"/>
</dbReference>
<dbReference type="InterPro" id="IPR029055">
    <property type="entry name" value="Ntn_hydrolases_N"/>
</dbReference>
<dbReference type="InterPro" id="IPR001347">
    <property type="entry name" value="SIS_dom"/>
</dbReference>
<dbReference type="InterPro" id="IPR046348">
    <property type="entry name" value="SIS_dom_sf"/>
</dbReference>
<dbReference type="NCBIfam" id="TIGR01135">
    <property type="entry name" value="glmS"/>
    <property type="match status" value="1"/>
</dbReference>
<dbReference type="NCBIfam" id="NF001484">
    <property type="entry name" value="PRK00331.1"/>
    <property type="match status" value="1"/>
</dbReference>
<dbReference type="PANTHER" id="PTHR10937">
    <property type="entry name" value="GLUCOSAMINE--FRUCTOSE-6-PHOSPHATE AMINOTRANSFERASE, ISOMERIZING"/>
    <property type="match status" value="1"/>
</dbReference>
<dbReference type="PANTHER" id="PTHR10937:SF0">
    <property type="entry name" value="GLUTAMINE--FRUCTOSE-6-PHOSPHATE TRANSAMINASE (ISOMERIZING)"/>
    <property type="match status" value="1"/>
</dbReference>
<dbReference type="Pfam" id="PF13522">
    <property type="entry name" value="GATase_6"/>
    <property type="match status" value="1"/>
</dbReference>
<dbReference type="Pfam" id="PF01380">
    <property type="entry name" value="SIS"/>
    <property type="match status" value="2"/>
</dbReference>
<dbReference type="SUPFAM" id="SSF56235">
    <property type="entry name" value="N-terminal nucleophile aminohydrolases (Ntn hydrolases)"/>
    <property type="match status" value="1"/>
</dbReference>
<dbReference type="SUPFAM" id="SSF53697">
    <property type="entry name" value="SIS domain"/>
    <property type="match status" value="1"/>
</dbReference>
<dbReference type="PROSITE" id="PS51278">
    <property type="entry name" value="GATASE_TYPE_2"/>
    <property type="match status" value="1"/>
</dbReference>
<dbReference type="PROSITE" id="PS51464">
    <property type="entry name" value="SIS"/>
    <property type="match status" value="2"/>
</dbReference>
<gene>
    <name evidence="1" type="primary">glmS</name>
    <name type="ordered locus">BH0268</name>
</gene>
<feature type="initiator methionine" description="Removed" evidence="1">
    <location>
        <position position="1"/>
    </location>
</feature>
<feature type="chain" id="PRO_0000135296" description="Glutamine--fructose-6-phosphate aminotransferase [isomerizing]">
    <location>
        <begin position="2"/>
        <end position="600"/>
    </location>
</feature>
<feature type="domain" description="Glutamine amidotransferase type-2" evidence="1">
    <location>
        <begin position="2"/>
        <end position="217"/>
    </location>
</feature>
<feature type="domain" description="SIS 1" evidence="1">
    <location>
        <begin position="283"/>
        <end position="422"/>
    </location>
</feature>
<feature type="domain" description="SIS 2" evidence="1">
    <location>
        <begin position="452"/>
        <end position="590"/>
    </location>
</feature>
<feature type="active site" description="Nucleophile; for GATase activity" evidence="1">
    <location>
        <position position="2"/>
    </location>
</feature>
<feature type="active site" description="For Fru-6P isomerization activity" evidence="1">
    <location>
        <position position="595"/>
    </location>
</feature>
<organism>
    <name type="scientific">Halalkalibacterium halodurans (strain ATCC BAA-125 / DSM 18197 / FERM 7344 / JCM 9153 / C-125)</name>
    <name type="common">Bacillus halodurans</name>
    <dbReference type="NCBI Taxonomy" id="272558"/>
    <lineage>
        <taxon>Bacteria</taxon>
        <taxon>Bacillati</taxon>
        <taxon>Bacillota</taxon>
        <taxon>Bacilli</taxon>
        <taxon>Bacillales</taxon>
        <taxon>Bacillaceae</taxon>
        <taxon>Halalkalibacterium (ex Joshi et al. 2022)</taxon>
    </lineage>
</organism>